<comment type="function">
    <text evidence="1">Nucleotidase that shows phosphatase activity on nucleoside 5'-monophosphates.</text>
</comment>
<comment type="catalytic activity">
    <reaction evidence="1">
        <text>a ribonucleoside 5'-phosphate + H2O = a ribonucleoside + phosphate</text>
        <dbReference type="Rhea" id="RHEA:12484"/>
        <dbReference type="ChEBI" id="CHEBI:15377"/>
        <dbReference type="ChEBI" id="CHEBI:18254"/>
        <dbReference type="ChEBI" id="CHEBI:43474"/>
        <dbReference type="ChEBI" id="CHEBI:58043"/>
        <dbReference type="EC" id="3.1.3.5"/>
    </reaction>
</comment>
<comment type="cofactor">
    <cofactor evidence="1">
        <name>a divalent metal cation</name>
        <dbReference type="ChEBI" id="CHEBI:60240"/>
    </cofactor>
    <text evidence="1">Binds 1 divalent metal cation per subunit.</text>
</comment>
<comment type="subcellular location">
    <subcellularLocation>
        <location evidence="1">Cytoplasm</location>
    </subcellularLocation>
</comment>
<comment type="similarity">
    <text evidence="1">Belongs to the SurE nucleotidase family.</text>
</comment>
<accession>Q0K950</accession>
<name>SURE_CUPNH</name>
<reference key="1">
    <citation type="journal article" date="2006" name="Nat. Biotechnol.">
        <title>Genome sequence of the bioplastic-producing 'Knallgas' bacterium Ralstonia eutropha H16.</title>
        <authorList>
            <person name="Pohlmann A."/>
            <person name="Fricke W.F."/>
            <person name="Reinecke F."/>
            <person name="Kusian B."/>
            <person name="Liesegang H."/>
            <person name="Cramm R."/>
            <person name="Eitinger T."/>
            <person name="Ewering C."/>
            <person name="Poetter M."/>
            <person name="Schwartz E."/>
            <person name="Strittmatter A."/>
            <person name="Voss I."/>
            <person name="Gottschalk G."/>
            <person name="Steinbuechel A."/>
            <person name="Friedrich B."/>
            <person name="Bowien B."/>
        </authorList>
    </citation>
    <scope>NUCLEOTIDE SEQUENCE [LARGE SCALE GENOMIC DNA]</scope>
    <source>
        <strain>ATCC 17699 / DSM 428 / KCTC 22496 / NCIMB 10442 / H16 / Stanier 337</strain>
    </source>
</reference>
<evidence type="ECO:0000255" key="1">
    <source>
        <dbReference type="HAMAP-Rule" id="MF_00060"/>
    </source>
</evidence>
<keyword id="KW-0963">Cytoplasm</keyword>
<keyword id="KW-0378">Hydrolase</keyword>
<keyword id="KW-0479">Metal-binding</keyword>
<keyword id="KW-0547">Nucleotide-binding</keyword>
<keyword id="KW-1185">Reference proteome</keyword>
<feature type="chain" id="PRO_1000007776" description="5'-nucleotidase SurE">
    <location>
        <begin position="1"/>
        <end position="250"/>
    </location>
</feature>
<feature type="binding site" evidence="1">
    <location>
        <position position="8"/>
    </location>
    <ligand>
        <name>a divalent metal cation</name>
        <dbReference type="ChEBI" id="CHEBI:60240"/>
    </ligand>
</feature>
<feature type="binding site" evidence="1">
    <location>
        <position position="9"/>
    </location>
    <ligand>
        <name>a divalent metal cation</name>
        <dbReference type="ChEBI" id="CHEBI:60240"/>
    </ligand>
</feature>
<feature type="binding site" evidence="1">
    <location>
        <position position="39"/>
    </location>
    <ligand>
        <name>a divalent metal cation</name>
        <dbReference type="ChEBI" id="CHEBI:60240"/>
    </ligand>
</feature>
<feature type="binding site" evidence="1">
    <location>
        <position position="95"/>
    </location>
    <ligand>
        <name>a divalent metal cation</name>
        <dbReference type="ChEBI" id="CHEBI:60240"/>
    </ligand>
</feature>
<organism>
    <name type="scientific">Cupriavidus necator (strain ATCC 17699 / DSM 428 / KCTC 22496 / NCIMB 10442 / H16 / Stanier 337)</name>
    <name type="common">Ralstonia eutropha</name>
    <dbReference type="NCBI Taxonomy" id="381666"/>
    <lineage>
        <taxon>Bacteria</taxon>
        <taxon>Pseudomonadati</taxon>
        <taxon>Pseudomonadota</taxon>
        <taxon>Betaproteobacteria</taxon>
        <taxon>Burkholderiales</taxon>
        <taxon>Burkholderiaceae</taxon>
        <taxon>Cupriavidus</taxon>
    </lineage>
</organism>
<proteinExistence type="inferred from homology"/>
<dbReference type="EC" id="3.1.3.5" evidence="1"/>
<dbReference type="EMBL" id="AM260479">
    <property type="protein sequence ID" value="CAJ93471.1"/>
    <property type="molecule type" value="Genomic_DNA"/>
</dbReference>
<dbReference type="RefSeq" id="WP_010814245.1">
    <property type="nucleotide sequence ID" value="NZ_CP039287.1"/>
</dbReference>
<dbReference type="SMR" id="Q0K950"/>
<dbReference type="STRING" id="381666.H16_A2376"/>
<dbReference type="KEGG" id="reh:H16_A2376"/>
<dbReference type="eggNOG" id="COG0496">
    <property type="taxonomic scope" value="Bacteria"/>
</dbReference>
<dbReference type="HOGENOM" id="CLU_045192_1_2_4"/>
<dbReference type="OrthoDB" id="9780815at2"/>
<dbReference type="Proteomes" id="UP000008210">
    <property type="component" value="Chromosome 1"/>
</dbReference>
<dbReference type="GO" id="GO:0005737">
    <property type="term" value="C:cytoplasm"/>
    <property type="evidence" value="ECO:0007669"/>
    <property type="project" value="UniProtKB-SubCell"/>
</dbReference>
<dbReference type="GO" id="GO:0008254">
    <property type="term" value="F:3'-nucleotidase activity"/>
    <property type="evidence" value="ECO:0007669"/>
    <property type="project" value="TreeGrafter"/>
</dbReference>
<dbReference type="GO" id="GO:0008253">
    <property type="term" value="F:5'-nucleotidase activity"/>
    <property type="evidence" value="ECO:0007669"/>
    <property type="project" value="UniProtKB-UniRule"/>
</dbReference>
<dbReference type="GO" id="GO:0004309">
    <property type="term" value="F:exopolyphosphatase activity"/>
    <property type="evidence" value="ECO:0007669"/>
    <property type="project" value="TreeGrafter"/>
</dbReference>
<dbReference type="GO" id="GO:0046872">
    <property type="term" value="F:metal ion binding"/>
    <property type="evidence" value="ECO:0007669"/>
    <property type="project" value="UniProtKB-UniRule"/>
</dbReference>
<dbReference type="GO" id="GO:0000166">
    <property type="term" value="F:nucleotide binding"/>
    <property type="evidence" value="ECO:0007669"/>
    <property type="project" value="UniProtKB-KW"/>
</dbReference>
<dbReference type="FunFam" id="3.40.1210.10:FF:000001">
    <property type="entry name" value="5'/3'-nucleotidase SurE"/>
    <property type="match status" value="1"/>
</dbReference>
<dbReference type="Gene3D" id="3.40.1210.10">
    <property type="entry name" value="Survival protein SurE-like phosphatase/nucleotidase"/>
    <property type="match status" value="1"/>
</dbReference>
<dbReference type="HAMAP" id="MF_00060">
    <property type="entry name" value="SurE"/>
    <property type="match status" value="1"/>
</dbReference>
<dbReference type="InterPro" id="IPR030048">
    <property type="entry name" value="SurE"/>
</dbReference>
<dbReference type="InterPro" id="IPR002828">
    <property type="entry name" value="SurE-like_Pase/nucleotidase"/>
</dbReference>
<dbReference type="InterPro" id="IPR036523">
    <property type="entry name" value="SurE-like_sf"/>
</dbReference>
<dbReference type="NCBIfam" id="NF001489">
    <property type="entry name" value="PRK00346.1-3"/>
    <property type="match status" value="1"/>
</dbReference>
<dbReference type="NCBIfam" id="NF001490">
    <property type="entry name" value="PRK00346.1-4"/>
    <property type="match status" value="1"/>
</dbReference>
<dbReference type="NCBIfam" id="TIGR00087">
    <property type="entry name" value="surE"/>
    <property type="match status" value="1"/>
</dbReference>
<dbReference type="PANTHER" id="PTHR30457">
    <property type="entry name" value="5'-NUCLEOTIDASE SURE"/>
    <property type="match status" value="1"/>
</dbReference>
<dbReference type="PANTHER" id="PTHR30457:SF12">
    <property type="entry name" value="5'_3'-NUCLEOTIDASE SURE"/>
    <property type="match status" value="1"/>
</dbReference>
<dbReference type="Pfam" id="PF01975">
    <property type="entry name" value="SurE"/>
    <property type="match status" value="1"/>
</dbReference>
<dbReference type="SUPFAM" id="SSF64167">
    <property type="entry name" value="SurE-like"/>
    <property type="match status" value="1"/>
</dbReference>
<sequence>MHILLANDDGYLAPGLAVLHAALAPLGRITVIAPEQNHSGASNSLTLQRPLSIYEAREGVQKGFRFVNGTPTDCVHIALTGLLEEKPDLVVSGINQGQNMGEDVLYSGTVAAAIEGYLLGIPSVAFSQVDKGWEHLDAAARVARTVVERIIGTPPAEPFLLNVNIPNLPFEHIKGYRATRLGKRHPSQPVITQVNPRGDTNYWIGPAGDARDASEGTDFHAAAAGYVSLTPLQLDLTHRGQLDALDQWLK</sequence>
<gene>
    <name evidence="1" type="primary">surE</name>
    <name type="ordered locus">H16_A2376</name>
</gene>
<protein>
    <recommendedName>
        <fullName evidence="1">5'-nucleotidase SurE</fullName>
        <ecNumber evidence="1">3.1.3.5</ecNumber>
    </recommendedName>
    <alternativeName>
        <fullName evidence="1">Nucleoside 5'-monophosphate phosphohydrolase</fullName>
    </alternativeName>
</protein>